<dbReference type="EC" id="3.2.1.17"/>
<dbReference type="EMBL" id="AAFI02000215">
    <property type="protein sequence ID" value="EAL60698.1"/>
    <property type="molecule type" value="Genomic_DNA"/>
</dbReference>
<dbReference type="RefSeq" id="XP_629111.1">
    <property type="nucleotide sequence ID" value="XM_629109.1"/>
</dbReference>
<dbReference type="SMR" id="Q54BQ8"/>
<dbReference type="FunCoup" id="Q54BQ8">
    <property type="interactions" value="2"/>
</dbReference>
<dbReference type="STRING" id="44689.Q54BQ8"/>
<dbReference type="PaxDb" id="44689-DDB0252576"/>
<dbReference type="EnsemblProtists" id="EAL60698">
    <property type="protein sequence ID" value="EAL60698"/>
    <property type="gene ID" value="DDB_G0293492"/>
</dbReference>
<dbReference type="GeneID" id="8629251"/>
<dbReference type="KEGG" id="ddi:DDB_G0293492"/>
<dbReference type="dictyBase" id="DDB_G0293492">
    <property type="gene designation" value="lyEh2"/>
</dbReference>
<dbReference type="VEuPathDB" id="AmoebaDB:DDB_G0293492"/>
<dbReference type="eggNOG" id="ENOG502S1SN">
    <property type="taxonomic scope" value="Eukaryota"/>
</dbReference>
<dbReference type="HOGENOM" id="CLU_073372_3_0_1"/>
<dbReference type="InParanoid" id="Q54BQ8"/>
<dbReference type="OMA" id="WSSPTMK"/>
<dbReference type="PhylomeDB" id="Q54BQ8"/>
<dbReference type="PRO" id="PR:Q54BQ8"/>
<dbReference type="Proteomes" id="UP000002195">
    <property type="component" value="Chromosome 6"/>
</dbReference>
<dbReference type="GO" id="GO:0005576">
    <property type="term" value="C:extracellular region"/>
    <property type="evidence" value="ECO:0007669"/>
    <property type="project" value="UniProtKB-SubCell"/>
</dbReference>
<dbReference type="GO" id="GO:0003796">
    <property type="term" value="F:lysozyme activity"/>
    <property type="evidence" value="ECO:0007669"/>
    <property type="project" value="UniProtKB-EC"/>
</dbReference>
<dbReference type="GO" id="GO:0016998">
    <property type="term" value="P:cell wall macromolecule catabolic process"/>
    <property type="evidence" value="ECO:0007669"/>
    <property type="project" value="InterPro"/>
</dbReference>
<dbReference type="GO" id="GO:0042742">
    <property type="term" value="P:defense response to bacterium"/>
    <property type="evidence" value="ECO:0007669"/>
    <property type="project" value="UniProtKB-KW"/>
</dbReference>
<dbReference type="GO" id="GO:0031640">
    <property type="term" value="P:killing of cells of another organism"/>
    <property type="evidence" value="ECO:0007669"/>
    <property type="project" value="UniProtKB-KW"/>
</dbReference>
<dbReference type="GO" id="GO:0009253">
    <property type="term" value="P:peptidoglycan catabolic process"/>
    <property type="evidence" value="ECO:0007669"/>
    <property type="project" value="InterPro"/>
</dbReference>
<dbReference type="GO" id="GO:0007165">
    <property type="term" value="P:signal transduction"/>
    <property type="evidence" value="ECO:0000318"/>
    <property type="project" value="GO_Central"/>
</dbReference>
<dbReference type="CDD" id="cd06416">
    <property type="entry name" value="GH25_Lys1-like"/>
    <property type="match status" value="1"/>
</dbReference>
<dbReference type="FunFam" id="3.20.20.80:FF:000101">
    <property type="entry name" value="Lysozyme, putative"/>
    <property type="match status" value="1"/>
</dbReference>
<dbReference type="Gene3D" id="3.20.20.80">
    <property type="entry name" value="Glycosidases"/>
    <property type="match status" value="1"/>
</dbReference>
<dbReference type="InterPro" id="IPR051595">
    <property type="entry name" value="GH25_Enzymes"/>
</dbReference>
<dbReference type="InterPro" id="IPR002053">
    <property type="entry name" value="Glyco_hydro_25"/>
</dbReference>
<dbReference type="InterPro" id="IPR017853">
    <property type="entry name" value="Glycoside_hydrolase_SF"/>
</dbReference>
<dbReference type="PANTHER" id="PTHR23208">
    <property type="entry name" value="LYSOZYME PROTEIN"/>
    <property type="match status" value="1"/>
</dbReference>
<dbReference type="PANTHER" id="PTHR23208:SF36">
    <property type="entry name" value="LYSOZYME-RELATED"/>
    <property type="match status" value="1"/>
</dbReference>
<dbReference type="Pfam" id="PF01183">
    <property type="entry name" value="Glyco_hydro_25"/>
    <property type="match status" value="1"/>
</dbReference>
<dbReference type="SUPFAM" id="SSF51445">
    <property type="entry name" value="(Trans)glycosidases"/>
    <property type="match status" value="1"/>
</dbReference>
<dbReference type="PROSITE" id="PS51904">
    <property type="entry name" value="GLYCOSYL_HYDROL_F25_2"/>
    <property type="match status" value="1"/>
</dbReference>
<evidence type="ECO:0000255" key="1"/>
<evidence type="ECO:0000255" key="2">
    <source>
        <dbReference type="PROSITE-ProRule" id="PRU01252"/>
    </source>
</evidence>
<evidence type="ECO:0000305" key="3"/>
<gene>
    <name type="ORF">DDB_G0293492</name>
</gene>
<sequence length="213" mass="23179">MRLFLLLITFIALFGAINAFSGVDISQGSSVGDFQCMLNQGFEFAIIRGYMETGQVDPEVVNSIACAREAGVEYVDTYLFPCFNCGNPQDQGPALVNYLSGYNANYGMVWLDIESSDWSGDQSANVAFFEGLISGLQSVGAHIGVYTSASQWIPIMGGYTGGSEFPLWYANWDGVQSFDDFSAFGGWSTPAIKQYNDGGSNCGVGYDFNWYPN</sequence>
<proteinExistence type="inferred from homology"/>
<reference key="1">
    <citation type="journal article" date="2005" name="Nature">
        <title>The genome of the social amoeba Dictyostelium discoideum.</title>
        <authorList>
            <person name="Eichinger L."/>
            <person name="Pachebat J.A."/>
            <person name="Gloeckner G."/>
            <person name="Rajandream M.A."/>
            <person name="Sucgang R."/>
            <person name="Berriman M."/>
            <person name="Song J."/>
            <person name="Olsen R."/>
            <person name="Szafranski K."/>
            <person name="Xu Q."/>
            <person name="Tunggal B."/>
            <person name="Kummerfeld S."/>
            <person name="Madera M."/>
            <person name="Konfortov B.A."/>
            <person name="Rivero F."/>
            <person name="Bankier A.T."/>
            <person name="Lehmann R."/>
            <person name="Hamlin N."/>
            <person name="Davies R."/>
            <person name="Gaudet P."/>
            <person name="Fey P."/>
            <person name="Pilcher K."/>
            <person name="Chen G."/>
            <person name="Saunders D."/>
            <person name="Sodergren E.J."/>
            <person name="Davis P."/>
            <person name="Kerhornou A."/>
            <person name="Nie X."/>
            <person name="Hall N."/>
            <person name="Anjard C."/>
            <person name="Hemphill L."/>
            <person name="Bason N."/>
            <person name="Farbrother P."/>
            <person name="Desany B."/>
            <person name="Just E."/>
            <person name="Morio T."/>
            <person name="Rost R."/>
            <person name="Churcher C.M."/>
            <person name="Cooper J."/>
            <person name="Haydock S."/>
            <person name="van Driessche N."/>
            <person name="Cronin A."/>
            <person name="Goodhead I."/>
            <person name="Muzny D.M."/>
            <person name="Mourier T."/>
            <person name="Pain A."/>
            <person name="Lu M."/>
            <person name="Harper D."/>
            <person name="Lindsay R."/>
            <person name="Hauser H."/>
            <person name="James K.D."/>
            <person name="Quiles M."/>
            <person name="Madan Babu M."/>
            <person name="Saito T."/>
            <person name="Buchrieser C."/>
            <person name="Wardroper A."/>
            <person name="Felder M."/>
            <person name="Thangavelu M."/>
            <person name="Johnson D."/>
            <person name="Knights A."/>
            <person name="Loulseged H."/>
            <person name="Mungall K.L."/>
            <person name="Oliver K."/>
            <person name="Price C."/>
            <person name="Quail M.A."/>
            <person name="Urushihara H."/>
            <person name="Hernandez J."/>
            <person name="Rabbinowitsch E."/>
            <person name="Steffen D."/>
            <person name="Sanders M."/>
            <person name="Ma J."/>
            <person name="Kohara Y."/>
            <person name="Sharp S."/>
            <person name="Simmonds M.N."/>
            <person name="Spiegler S."/>
            <person name="Tivey A."/>
            <person name="Sugano S."/>
            <person name="White B."/>
            <person name="Walker D."/>
            <person name="Woodward J.R."/>
            <person name="Winckler T."/>
            <person name="Tanaka Y."/>
            <person name="Shaulsky G."/>
            <person name="Schleicher M."/>
            <person name="Weinstock G.M."/>
            <person name="Rosenthal A."/>
            <person name="Cox E.C."/>
            <person name="Chisholm R.L."/>
            <person name="Gibbs R.A."/>
            <person name="Loomis W.F."/>
            <person name="Platzer M."/>
            <person name="Kay R.R."/>
            <person name="Williams J.G."/>
            <person name="Dear P.H."/>
            <person name="Noegel A.A."/>
            <person name="Barrell B.G."/>
            <person name="Kuspa A."/>
        </authorList>
    </citation>
    <scope>NUCLEOTIDE SEQUENCE [LARGE SCALE GENOMIC DNA]</scope>
    <source>
        <strain>AX4</strain>
    </source>
</reference>
<feature type="signal peptide" evidence="1">
    <location>
        <begin position="1"/>
        <end position="19"/>
    </location>
</feature>
<feature type="chain" id="PRO_0000330650" description="Probable GH family 25 lysozyme 4">
    <location>
        <begin position="20"/>
        <end position="213"/>
    </location>
</feature>
<feature type="domain" description="Ch-type lysozyme" evidence="2">
    <location>
        <begin position="21"/>
        <end position="213"/>
    </location>
</feature>
<feature type="active site" evidence="2">
    <location>
        <position position="24"/>
    </location>
</feature>
<feature type="active site" evidence="2">
    <location>
        <position position="112"/>
    </location>
</feature>
<feature type="active site" evidence="2">
    <location>
        <position position="114"/>
    </location>
</feature>
<name>LYSG4_DICDI</name>
<protein>
    <recommendedName>
        <fullName>Probable GH family 25 lysozyme 4</fullName>
        <ecNumber>3.2.1.17</ecNumber>
    </recommendedName>
    <alternativeName>
        <fullName>1,4-beta-N-acetylmuramidase 4</fullName>
    </alternativeName>
</protein>
<comment type="catalytic activity">
    <reaction>
        <text>Hydrolysis of (1-&gt;4)-beta-linkages between N-acetylmuramic acid and N-acetyl-D-glucosamine residues in a peptidoglycan and between N-acetyl-D-glucosamine residues in chitodextrins.</text>
        <dbReference type="EC" id="3.2.1.17"/>
    </reaction>
</comment>
<comment type="subcellular location">
    <subcellularLocation>
        <location evidence="3">Secreted</location>
    </subcellularLocation>
</comment>
<comment type="similarity">
    <text evidence="2 3">Belongs to the glycosyl hydrolase 25 family.</text>
</comment>
<keyword id="KW-0929">Antimicrobial</keyword>
<keyword id="KW-0081">Bacteriolytic enzyme</keyword>
<keyword id="KW-0326">Glycosidase</keyword>
<keyword id="KW-0378">Hydrolase</keyword>
<keyword id="KW-1185">Reference proteome</keyword>
<keyword id="KW-0964">Secreted</keyword>
<keyword id="KW-0732">Signal</keyword>
<organism>
    <name type="scientific">Dictyostelium discoideum</name>
    <name type="common">Social amoeba</name>
    <dbReference type="NCBI Taxonomy" id="44689"/>
    <lineage>
        <taxon>Eukaryota</taxon>
        <taxon>Amoebozoa</taxon>
        <taxon>Evosea</taxon>
        <taxon>Eumycetozoa</taxon>
        <taxon>Dictyostelia</taxon>
        <taxon>Dictyosteliales</taxon>
        <taxon>Dictyosteliaceae</taxon>
        <taxon>Dictyostelium</taxon>
    </lineage>
</organism>
<accession>Q54BQ8</accession>